<comment type="function">
    <text evidence="1">Catalyzes the addition and repair of the essential 3'-terminal CCA sequence in tRNAs without using a nucleic acid template. Adds these three nucleotides in the order of C, C, and A to the tRNA nucleotide-73, using CTP and ATP as substrates and producing inorganic pyrophosphate. tRNA 3'-terminal CCA addition is required both for tRNA processing and repair. Also involved in tRNA surveillance by mediating tandem CCA addition to generate a CCACCA at the 3' terminus of unstable tRNAs. While stable tRNAs receive only 3'-terminal CCA, unstable tRNAs are marked with CCACCA and rapidly degraded.</text>
</comment>
<comment type="catalytic activity">
    <reaction evidence="1">
        <text>a tRNA precursor + 2 CTP + ATP = a tRNA with a 3' CCA end + 3 diphosphate</text>
        <dbReference type="Rhea" id="RHEA:14433"/>
        <dbReference type="Rhea" id="RHEA-COMP:10465"/>
        <dbReference type="Rhea" id="RHEA-COMP:10468"/>
        <dbReference type="ChEBI" id="CHEBI:30616"/>
        <dbReference type="ChEBI" id="CHEBI:33019"/>
        <dbReference type="ChEBI" id="CHEBI:37563"/>
        <dbReference type="ChEBI" id="CHEBI:74896"/>
        <dbReference type="ChEBI" id="CHEBI:83071"/>
        <dbReference type="EC" id="2.7.7.72"/>
    </reaction>
</comment>
<comment type="catalytic activity">
    <reaction evidence="1">
        <text>a tRNA with a 3' CCA end + 2 CTP + ATP = a tRNA with a 3' CCACCA end + 3 diphosphate</text>
        <dbReference type="Rhea" id="RHEA:76235"/>
        <dbReference type="Rhea" id="RHEA-COMP:10468"/>
        <dbReference type="Rhea" id="RHEA-COMP:18655"/>
        <dbReference type="ChEBI" id="CHEBI:30616"/>
        <dbReference type="ChEBI" id="CHEBI:33019"/>
        <dbReference type="ChEBI" id="CHEBI:37563"/>
        <dbReference type="ChEBI" id="CHEBI:83071"/>
        <dbReference type="ChEBI" id="CHEBI:195187"/>
    </reaction>
    <physiologicalReaction direction="left-to-right" evidence="1">
        <dbReference type="Rhea" id="RHEA:76236"/>
    </physiologicalReaction>
</comment>
<comment type="cofactor">
    <cofactor evidence="1">
        <name>Mg(2+)</name>
        <dbReference type="ChEBI" id="CHEBI:18420"/>
    </cofactor>
    <text evidence="1">Magnesium is required for nucleotidyltransferase activity.</text>
</comment>
<comment type="cofactor">
    <cofactor evidence="1">
        <name>Ni(2+)</name>
        <dbReference type="ChEBI" id="CHEBI:49786"/>
    </cofactor>
    <text evidence="1">Nickel for phosphatase activity.</text>
</comment>
<comment type="subunit">
    <text evidence="1">Monomer. Can also form homodimers and oligomers.</text>
</comment>
<comment type="domain">
    <text evidence="1">Comprises two domains: an N-terminal domain containing the nucleotidyltransferase activity and a C-terminal HD domain associated with both phosphodiesterase and phosphatase activities.</text>
</comment>
<comment type="miscellaneous">
    <text evidence="1">A single active site specifically recognizes both ATP and CTP and is responsible for their addition.</text>
</comment>
<comment type="similarity">
    <text evidence="1">Belongs to the tRNA nucleotidyltransferase/poly(A) polymerase family. Bacterial CCA-adding enzyme type 1 subfamily.</text>
</comment>
<proteinExistence type="inferred from homology"/>
<protein>
    <recommendedName>
        <fullName evidence="1">Multifunctional CCA protein</fullName>
    </recommendedName>
    <domain>
        <recommendedName>
            <fullName evidence="1">CCA-adding enzyme</fullName>
            <ecNumber evidence="1">2.7.7.72</ecNumber>
        </recommendedName>
        <alternativeName>
            <fullName evidence="1">CCA tRNA nucleotidyltransferase</fullName>
        </alternativeName>
        <alternativeName>
            <fullName evidence="1">tRNA CCA-pyrophosphorylase</fullName>
        </alternativeName>
        <alternativeName>
            <fullName evidence="1">tRNA adenylyl-/cytidylyl-transferase</fullName>
        </alternativeName>
        <alternativeName>
            <fullName evidence="1">tRNA nucleotidyltransferase</fullName>
        </alternativeName>
        <alternativeName>
            <fullName evidence="1">tRNA-NT</fullName>
        </alternativeName>
    </domain>
    <domain>
        <recommendedName>
            <fullName evidence="1">2'-nucleotidase</fullName>
            <ecNumber evidence="1">3.1.3.-</ecNumber>
        </recommendedName>
    </domain>
    <domain>
        <recommendedName>
            <fullName evidence="1">2',3'-cyclic phosphodiesterase</fullName>
            <ecNumber evidence="1">3.1.4.-</ecNumber>
        </recommendedName>
    </domain>
    <domain>
        <recommendedName>
            <fullName evidence="1">Phosphatase</fullName>
            <ecNumber evidence="1">3.1.3.-</ecNumber>
        </recommendedName>
    </domain>
</protein>
<sequence length="425" mass="47095">MQIYMVGGAVRDRLLGRPVNDHDWVVVGATPDDMVARGYLPVGRDFPVFLHPETREEYALARTERKSGRGYRGFVVQTSPDVTLEEDLSRRDLTINAIAASADWTGAEDLFDPYGGARDLQARVLRHVTDSFREDPVRILRVARFAARFTDFTVAPETMQLMREMVHDGEADHLVPERVWQELARGLMEPQPSRMFDVLRDCGALAVVLPEVERLWGVPQRPEYHPEVDTGVHLMMVLDMAAHLQAPLTVRFACLTHDLGKGTTPHDVLPRHIGHEQRSARLLKAVCERLRVPVECRELADVVAREHGNIHRSGDLGAAALVRLLERCDAIRKPARLDEILLACECDARGRLGFADRPYPQRARINAALAAVQSVTTSSVAAHAAQLGLSGPKVGEMIHAARVQAVADWLHATAQPAPEPRGNAG</sequence>
<dbReference type="EC" id="2.7.7.72" evidence="1"/>
<dbReference type="EC" id="3.1.3.-" evidence="1"/>
<dbReference type="EC" id="3.1.4.-" evidence="1"/>
<dbReference type="EMBL" id="CP001392">
    <property type="protein sequence ID" value="ACM32001.1"/>
    <property type="molecule type" value="Genomic_DNA"/>
</dbReference>
<dbReference type="RefSeq" id="WP_012655550.1">
    <property type="nucleotide sequence ID" value="NC_011992.1"/>
</dbReference>
<dbReference type="SMR" id="B9MCK1"/>
<dbReference type="KEGG" id="dia:Dtpsy_0521"/>
<dbReference type="eggNOG" id="COG0617">
    <property type="taxonomic scope" value="Bacteria"/>
</dbReference>
<dbReference type="HOGENOM" id="CLU_015961_1_1_4"/>
<dbReference type="Proteomes" id="UP000000450">
    <property type="component" value="Chromosome"/>
</dbReference>
<dbReference type="GO" id="GO:0005524">
    <property type="term" value="F:ATP binding"/>
    <property type="evidence" value="ECO:0007669"/>
    <property type="project" value="UniProtKB-UniRule"/>
</dbReference>
<dbReference type="GO" id="GO:0004810">
    <property type="term" value="F:CCA tRNA nucleotidyltransferase activity"/>
    <property type="evidence" value="ECO:0007669"/>
    <property type="project" value="UniProtKB-UniRule"/>
</dbReference>
<dbReference type="GO" id="GO:0004112">
    <property type="term" value="F:cyclic-nucleotide phosphodiesterase activity"/>
    <property type="evidence" value="ECO:0007669"/>
    <property type="project" value="UniProtKB-UniRule"/>
</dbReference>
<dbReference type="GO" id="GO:0000287">
    <property type="term" value="F:magnesium ion binding"/>
    <property type="evidence" value="ECO:0007669"/>
    <property type="project" value="UniProtKB-UniRule"/>
</dbReference>
<dbReference type="GO" id="GO:0016791">
    <property type="term" value="F:phosphatase activity"/>
    <property type="evidence" value="ECO:0007669"/>
    <property type="project" value="UniProtKB-UniRule"/>
</dbReference>
<dbReference type="GO" id="GO:0000049">
    <property type="term" value="F:tRNA binding"/>
    <property type="evidence" value="ECO:0007669"/>
    <property type="project" value="UniProtKB-UniRule"/>
</dbReference>
<dbReference type="GO" id="GO:0042245">
    <property type="term" value="P:RNA repair"/>
    <property type="evidence" value="ECO:0007669"/>
    <property type="project" value="UniProtKB-KW"/>
</dbReference>
<dbReference type="GO" id="GO:0001680">
    <property type="term" value="P:tRNA 3'-terminal CCA addition"/>
    <property type="evidence" value="ECO:0007669"/>
    <property type="project" value="UniProtKB-UniRule"/>
</dbReference>
<dbReference type="CDD" id="cd00077">
    <property type="entry name" value="HDc"/>
    <property type="match status" value="1"/>
</dbReference>
<dbReference type="CDD" id="cd05398">
    <property type="entry name" value="NT_ClassII-CCAase"/>
    <property type="match status" value="1"/>
</dbReference>
<dbReference type="Gene3D" id="3.30.460.10">
    <property type="entry name" value="Beta Polymerase, domain 2"/>
    <property type="match status" value="1"/>
</dbReference>
<dbReference type="Gene3D" id="1.10.3090.10">
    <property type="entry name" value="cca-adding enzyme, domain 2"/>
    <property type="match status" value="1"/>
</dbReference>
<dbReference type="HAMAP" id="MF_01261">
    <property type="entry name" value="CCA_bact_type1"/>
    <property type="match status" value="1"/>
</dbReference>
<dbReference type="HAMAP" id="MF_01262">
    <property type="entry name" value="CCA_bact_type2"/>
    <property type="match status" value="1"/>
</dbReference>
<dbReference type="InterPro" id="IPR012006">
    <property type="entry name" value="CCA_bact"/>
</dbReference>
<dbReference type="InterPro" id="IPR003607">
    <property type="entry name" value="HD/PDEase_dom"/>
</dbReference>
<dbReference type="InterPro" id="IPR006674">
    <property type="entry name" value="HD_domain"/>
</dbReference>
<dbReference type="InterPro" id="IPR043519">
    <property type="entry name" value="NT_sf"/>
</dbReference>
<dbReference type="InterPro" id="IPR002646">
    <property type="entry name" value="PolA_pol_head_dom"/>
</dbReference>
<dbReference type="InterPro" id="IPR032828">
    <property type="entry name" value="PolyA_RNA-bd"/>
</dbReference>
<dbReference type="InterPro" id="IPR050124">
    <property type="entry name" value="tRNA_CCA-adding_enzyme"/>
</dbReference>
<dbReference type="NCBIfam" id="NF008137">
    <property type="entry name" value="PRK10885.1"/>
    <property type="match status" value="1"/>
</dbReference>
<dbReference type="PANTHER" id="PTHR47545">
    <property type="entry name" value="MULTIFUNCTIONAL CCA PROTEIN"/>
    <property type="match status" value="1"/>
</dbReference>
<dbReference type="PANTHER" id="PTHR47545:SF1">
    <property type="entry name" value="MULTIFUNCTIONAL CCA PROTEIN"/>
    <property type="match status" value="1"/>
</dbReference>
<dbReference type="Pfam" id="PF01966">
    <property type="entry name" value="HD"/>
    <property type="match status" value="1"/>
</dbReference>
<dbReference type="Pfam" id="PF01743">
    <property type="entry name" value="PolyA_pol"/>
    <property type="match status" value="1"/>
</dbReference>
<dbReference type="Pfam" id="PF12627">
    <property type="entry name" value="PolyA_pol_RNAbd"/>
    <property type="match status" value="1"/>
</dbReference>
<dbReference type="PIRSF" id="PIRSF000813">
    <property type="entry name" value="CCA_bact"/>
    <property type="match status" value="1"/>
</dbReference>
<dbReference type="SUPFAM" id="SSF81301">
    <property type="entry name" value="Nucleotidyltransferase"/>
    <property type="match status" value="1"/>
</dbReference>
<dbReference type="SUPFAM" id="SSF81891">
    <property type="entry name" value="Poly A polymerase C-terminal region-like"/>
    <property type="match status" value="1"/>
</dbReference>
<dbReference type="PROSITE" id="PS51831">
    <property type="entry name" value="HD"/>
    <property type="match status" value="1"/>
</dbReference>
<keyword id="KW-0067">ATP-binding</keyword>
<keyword id="KW-0378">Hydrolase</keyword>
<keyword id="KW-0460">Magnesium</keyword>
<keyword id="KW-0479">Metal-binding</keyword>
<keyword id="KW-0511">Multifunctional enzyme</keyword>
<keyword id="KW-0533">Nickel</keyword>
<keyword id="KW-0547">Nucleotide-binding</keyword>
<keyword id="KW-0548">Nucleotidyltransferase</keyword>
<keyword id="KW-1185">Reference proteome</keyword>
<keyword id="KW-0692">RNA repair</keyword>
<keyword id="KW-0694">RNA-binding</keyword>
<keyword id="KW-0808">Transferase</keyword>
<keyword id="KW-0819">tRNA processing</keyword>
<name>CCA_ACIET</name>
<reference key="1">
    <citation type="submission" date="2009-01" db="EMBL/GenBank/DDBJ databases">
        <title>Complete sequence of Diaphorobacter sp. TPSY.</title>
        <authorList>
            <consortium name="US DOE Joint Genome Institute"/>
            <person name="Lucas S."/>
            <person name="Copeland A."/>
            <person name="Lapidus A."/>
            <person name="Glavina del Rio T."/>
            <person name="Tice H."/>
            <person name="Bruce D."/>
            <person name="Goodwin L."/>
            <person name="Pitluck S."/>
            <person name="Chertkov O."/>
            <person name="Brettin T."/>
            <person name="Detter J.C."/>
            <person name="Han C."/>
            <person name="Larimer F."/>
            <person name="Land M."/>
            <person name="Hauser L."/>
            <person name="Kyrpides N."/>
            <person name="Mikhailova N."/>
            <person name="Coates J.D."/>
        </authorList>
    </citation>
    <scope>NUCLEOTIDE SEQUENCE [LARGE SCALE GENOMIC DNA]</scope>
    <source>
        <strain>TPSY</strain>
    </source>
</reference>
<accession>B9MCK1</accession>
<gene>
    <name evidence="1" type="primary">cca</name>
    <name type="ordered locus">Dtpsy_0521</name>
</gene>
<feature type="chain" id="PRO_1000165118" description="Multifunctional CCA protein">
    <location>
        <begin position="1"/>
        <end position="425"/>
    </location>
</feature>
<feature type="domain" description="HD" evidence="1">
    <location>
        <begin position="230"/>
        <end position="331"/>
    </location>
</feature>
<feature type="binding site" evidence="1">
    <location>
        <position position="8"/>
    </location>
    <ligand>
        <name>ATP</name>
        <dbReference type="ChEBI" id="CHEBI:30616"/>
    </ligand>
</feature>
<feature type="binding site" evidence="1">
    <location>
        <position position="8"/>
    </location>
    <ligand>
        <name>CTP</name>
        <dbReference type="ChEBI" id="CHEBI:37563"/>
    </ligand>
</feature>
<feature type="binding site" evidence="1">
    <location>
        <position position="11"/>
    </location>
    <ligand>
        <name>ATP</name>
        <dbReference type="ChEBI" id="CHEBI:30616"/>
    </ligand>
</feature>
<feature type="binding site" evidence="1">
    <location>
        <position position="11"/>
    </location>
    <ligand>
        <name>CTP</name>
        <dbReference type="ChEBI" id="CHEBI:37563"/>
    </ligand>
</feature>
<feature type="binding site" evidence="1">
    <location>
        <position position="21"/>
    </location>
    <ligand>
        <name>Mg(2+)</name>
        <dbReference type="ChEBI" id="CHEBI:18420"/>
    </ligand>
</feature>
<feature type="binding site" evidence="1">
    <location>
        <position position="23"/>
    </location>
    <ligand>
        <name>Mg(2+)</name>
        <dbReference type="ChEBI" id="CHEBI:18420"/>
    </ligand>
</feature>
<feature type="binding site" evidence="1">
    <location>
        <position position="91"/>
    </location>
    <ligand>
        <name>ATP</name>
        <dbReference type="ChEBI" id="CHEBI:30616"/>
    </ligand>
</feature>
<feature type="binding site" evidence="1">
    <location>
        <position position="91"/>
    </location>
    <ligand>
        <name>CTP</name>
        <dbReference type="ChEBI" id="CHEBI:37563"/>
    </ligand>
</feature>
<feature type="binding site" evidence="1">
    <location>
        <position position="141"/>
    </location>
    <ligand>
        <name>ATP</name>
        <dbReference type="ChEBI" id="CHEBI:30616"/>
    </ligand>
</feature>
<feature type="binding site" evidence="1">
    <location>
        <position position="141"/>
    </location>
    <ligand>
        <name>CTP</name>
        <dbReference type="ChEBI" id="CHEBI:37563"/>
    </ligand>
</feature>
<feature type="binding site" evidence="1">
    <location>
        <position position="144"/>
    </location>
    <ligand>
        <name>ATP</name>
        <dbReference type="ChEBI" id="CHEBI:30616"/>
    </ligand>
</feature>
<feature type="binding site" evidence="1">
    <location>
        <position position="144"/>
    </location>
    <ligand>
        <name>CTP</name>
        <dbReference type="ChEBI" id="CHEBI:37563"/>
    </ligand>
</feature>
<organism>
    <name type="scientific">Acidovorax ebreus (strain TPSY)</name>
    <name type="common">Diaphorobacter sp. (strain TPSY)</name>
    <dbReference type="NCBI Taxonomy" id="535289"/>
    <lineage>
        <taxon>Bacteria</taxon>
        <taxon>Pseudomonadati</taxon>
        <taxon>Pseudomonadota</taxon>
        <taxon>Betaproteobacteria</taxon>
        <taxon>Burkholderiales</taxon>
        <taxon>Comamonadaceae</taxon>
        <taxon>Diaphorobacter</taxon>
    </lineage>
</organism>
<evidence type="ECO:0000255" key="1">
    <source>
        <dbReference type="HAMAP-Rule" id="MF_01261"/>
    </source>
</evidence>